<name>LPXC_BRUC2</name>
<comment type="function">
    <text evidence="1">Catalyzes the hydrolysis of UDP-3-O-myristoyl-N-acetylglucosamine to form UDP-3-O-myristoylglucosamine and acetate, the committed step in lipid A biosynthesis.</text>
</comment>
<comment type="catalytic activity">
    <reaction evidence="1">
        <text>a UDP-3-O-[(3R)-3-hydroxyacyl]-N-acetyl-alpha-D-glucosamine + H2O = a UDP-3-O-[(3R)-3-hydroxyacyl]-alpha-D-glucosamine + acetate</text>
        <dbReference type="Rhea" id="RHEA:67816"/>
        <dbReference type="ChEBI" id="CHEBI:15377"/>
        <dbReference type="ChEBI" id="CHEBI:30089"/>
        <dbReference type="ChEBI" id="CHEBI:137740"/>
        <dbReference type="ChEBI" id="CHEBI:173225"/>
        <dbReference type="EC" id="3.5.1.108"/>
    </reaction>
</comment>
<comment type="cofactor">
    <cofactor evidence="1">
        <name>Zn(2+)</name>
        <dbReference type="ChEBI" id="CHEBI:29105"/>
    </cofactor>
</comment>
<comment type="pathway">
    <text evidence="1">Glycolipid biosynthesis; lipid IV(A) biosynthesis; lipid IV(A) from (3R)-3-hydroxytetradecanoyl-[acyl-carrier-protein] and UDP-N-acetyl-alpha-D-glucosamine: step 2/6.</text>
</comment>
<comment type="similarity">
    <text evidence="1">Belongs to the LpxC family.</text>
</comment>
<accession>A9M683</accession>
<proteinExistence type="inferred from homology"/>
<keyword id="KW-0378">Hydrolase</keyword>
<keyword id="KW-0441">Lipid A biosynthesis</keyword>
<keyword id="KW-0444">Lipid biosynthesis</keyword>
<keyword id="KW-0443">Lipid metabolism</keyword>
<keyword id="KW-0479">Metal-binding</keyword>
<keyword id="KW-1185">Reference proteome</keyword>
<keyword id="KW-0862">Zinc</keyword>
<protein>
    <recommendedName>
        <fullName evidence="1">UDP-3-O-acyl-N-acetylglucosamine deacetylase</fullName>
        <shortName evidence="1">UDP-3-O-acyl-GlcNAc deacetylase</shortName>
        <ecNumber evidence="1">3.5.1.108</ecNumber>
    </recommendedName>
    <alternativeName>
        <fullName evidence="1">UDP-3-O-[R-3-hydroxymyristoyl]-N-acetylglucosamine deacetylase</fullName>
    </alternativeName>
</protein>
<evidence type="ECO:0000255" key="1">
    <source>
        <dbReference type="HAMAP-Rule" id="MF_00388"/>
    </source>
</evidence>
<reference key="1">
    <citation type="submission" date="2007-10" db="EMBL/GenBank/DDBJ databases">
        <title>Brucella canis ATCC 23365 whole genome shotgun sequencing project.</title>
        <authorList>
            <person name="Setubal J.C."/>
            <person name="Bowns C."/>
            <person name="Boyle S."/>
            <person name="Crasta O.R."/>
            <person name="Czar M.J."/>
            <person name="Dharmanolla C."/>
            <person name="Gillespie J.J."/>
            <person name="Kenyon R.W."/>
            <person name="Lu J."/>
            <person name="Mane S."/>
            <person name="Mohapatra S."/>
            <person name="Nagrani S."/>
            <person name="Purkayastha A."/>
            <person name="Rajasimha H.K."/>
            <person name="Shallom J.M."/>
            <person name="Shallom S."/>
            <person name="Shukla M."/>
            <person name="Snyder E.E."/>
            <person name="Sobral B.W."/>
            <person name="Wattam A.R."/>
            <person name="Will R."/>
            <person name="Williams K."/>
            <person name="Yoo H."/>
            <person name="Bruce D."/>
            <person name="Detter C."/>
            <person name="Munk C."/>
            <person name="Brettin T.S."/>
        </authorList>
    </citation>
    <scope>NUCLEOTIDE SEQUENCE [LARGE SCALE GENOMIC DNA]</scope>
    <source>
        <strain>ATCC 23365 / NCTC 10854 / RM-666</strain>
    </source>
</reference>
<sequence length="286" mass="30853">MNAYQKTIGRAVTLSGVGVHGGAPASARLLPADADTGILFQRSDIKDSAPVCAHVSQIGATDLCTSLGAREARIDTVEHLMAAISALGIDNLVVEIEGPEVPILDGTSARFIEAVDSVGVVTQDAKRRFIRILKTVRVEAGNSWGEFRPYDGTRFEVEIDFECPLIGRQKFAHDVDEETFRKELSTARTFGFMKDVERLWAAGLALGASLDNSLVIGDDNSIVNADGLRFKDEFVRHKTLDAVGDLALAGLPFIGCFSSYRGGHRLNSEAVKALLSDETAFEIIEA</sequence>
<dbReference type="EC" id="3.5.1.108" evidence="1"/>
<dbReference type="EMBL" id="CP000872">
    <property type="protein sequence ID" value="ABX62488.1"/>
    <property type="molecule type" value="Genomic_DNA"/>
</dbReference>
<dbReference type="RefSeq" id="WP_002964532.1">
    <property type="nucleotide sequence ID" value="NC_010103.1"/>
</dbReference>
<dbReference type="SMR" id="A9M683"/>
<dbReference type="GeneID" id="97533370"/>
<dbReference type="KEGG" id="bcs:BCAN_A1457"/>
<dbReference type="HOGENOM" id="CLU_046528_1_1_5"/>
<dbReference type="PhylomeDB" id="A9M683"/>
<dbReference type="UniPathway" id="UPA00359">
    <property type="reaction ID" value="UER00478"/>
</dbReference>
<dbReference type="Proteomes" id="UP000001385">
    <property type="component" value="Chromosome I"/>
</dbReference>
<dbReference type="GO" id="GO:0016020">
    <property type="term" value="C:membrane"/>
    <property type="evidence" value="ECO:0007669"/>
    <property type="project" value="GOC"/>
</dbReference>
<dbReference type="GO" id="GO:0046872">
    <property type="term" value="F:metal ion binding"/>
    <property type="evidence" value="ECO:0007669"/>
    <property type="project" value="UniProtKB-KW"/>
</dbReference>
<dbReference type="GO" id="GO:0103117">
    <property type="term" value="F:UDP-3-O-acyl-N-acetylglucosamine deacetylase activity"/>
    <property type="evidence" value="ECO:0007669"/>
    <property type="project" value="UniProtKB-UniRule"/>
</dbReference>
<dbReference type="GO" id="GO:0009245">
    <property type="term" value="P:lipid A biosynthetic process"/>
    <property type="evidence" value="ECO:0007669"/>
    <property type="project" value="UniProtKB-UniRule"/>
</dbReference>
<dbReference type="Gene3D" id="3.30.230.20">
    <property type="entry name" value="lpxc deacetylase, domain 1"/>
    <property type="match status" value="1"/>
</dbReference>
<dbReference type="Gene3D" id="3.30.1700.10">
    <property type="entry name" value="lpxc deacetylase, domain 2"/>
    <property type="match status" value="1"/>
</dbReference>
<dbReference type="HAMAP" id="MF_00388">
    <property type="entry name" value="LpxC"/>
    <property type="match status" value="1"/>
</dbReference>
<dbReference type="InterPro" id="IPR020568">
    <property type="entry name" value="Ribosomal_Su5_D2-typ_SF"/>
</dbReference>
<dbReference type="InterPro" id="IPR004463">
    <property type="entry name" value="UDP-acyl_GlcNac_deAcase"/>
</dbReference>
<dbReference type="InterPro" id="IPR011334">
    <property type="entry name" value="UDP-acyl_GlcNac_deAcase_C"/>
</dbReference>
<dbReference type="InterPro" id="IPR015870">
    <property type="entry name" value="UDP-acyl_N-AcGlcN_deAcase_N"/>
</dbReference>
<dbReference type="NCBIfam" id="TIGR00325">
    <property type="entry name" value="lpxC"/>
    <property type="match status" value="1"/>
</dbReference>
<dbReference type="PANTHER" id="PTHR33694">
    <property type="entry name" value="UDP-3-O-ACYL-N-ACETYLGLUCOSAMINE DEACETYLASE 1, MITOCHONDRIAL-RELATED"/>
    <property type="match status" value="1"/>
</dbReference>
<dbReference type="PANTHER" id="PTHR33694:SF1">
    <property type="entry name" value="UDP-3-O-ACYL-N-ACETYLGLUCOSAMINE DEACETYLASE 1, MITOCHONDRIAL-RELATED"/>
    <property type="match status" value="1"/>
</dbReference>
<dbReference type="Pfam" id="PF03331">
    <property type="entry name" value="LpxC"/>
    <property type="match status" value="1"/>
</dbReference>
<dbReference type="SUPFAM" id="SSF54211">
    <property type="entry name" value="Ribosomal protein S5 domain 2-like"/>
    <property type="match status" value="2"/>
</dbReference>
<feature type="chain" id="PRO_1000122762" description="UDP-3-O-acyl-N-acetylglucosamine deacetylase">
    <location>
        <begin position="1"/>
        <end position="286"/>
    </location>
</feature>
<feature type="active site" description="Proton donor" evidence="1">
    <location>
        <position position="264"/>
    </location>
</feature>
<feature type="binding site" evidence="1">
    <location>
        <position position="79"/>
    </location>
    <ligand>
        <name>Zn(2+)</name>
        <dbReference type="ChEBI" id="CHEBI:29105"/>
    </ligand>
</feature>
<feature type="binding site" evidence="1">
    <location>
        <position position="237"/>
    </location>
    <ligand>
        <name>Zn(2+)</name>
        <dbReference type="ChEBI" id="CHEBI:29105"/>
    </ligand>
</feature>
<feature type="binding site" evidence="1">
    <location>
        <position position="241"/>
    </location>
    <ligand>
        <name>Zn(2+)</name>
        <dbReference type="ChEBI" id="CHEBI:29105"/>
    </ligand>
</feature>
<organism>
    <name type="scientific">Brucella canis (strain ATCC 23365 / NCTC 10854 / RM-666)</name>
    <dbReference type="NCBI Taxonomy" id="483179"/>
    <lineage>
        <taxon>Bacteria</taxon>
        <taxon>Pseudomonadati</taxon>
        <taxon>Pseudomonadota</taxon>
        <taxon>Alphaproteobacteria</taxon>
        <taxon>Hyphomicrobiales</taxon>
        <taxon>Brucellaceae</taxon>
        <taxon>Brucella/Ochrobactrum group</taxon>
        <taxon>Brucella</taxon>
    </lineage>
</organism>
<gene>
    <name evidence="1" type="primary">lpxC</name>
    <name type="ordered locus">BCAN_A1457</name>
</gene>